<organism>
    <name type="scientific">Rickettsia bellii (strain RML369-C)</name>
    <dbReference type="NCBI Taxonomy" id="336407"/>
    <lineage>
        <taxon>Bacteria</taxon>
        <taxon>Pseudomonadati</taxon>
        <taxon>Pseudomonadota</taxon>
        <taxon>Alphaproteobacteria</taxon>
        <taxon>Rickettsiales</taxon>
        <taxon>Rickettsiaceae</taxon>
        <taxon>Rickettsieae</taxon>
        <taxon>Rickettsia</taxon>
        <taxon>belli group</taxon>
    </lineage>
</organism>
<protein>
    <recommendedName>
        <fullName evidence="1">Putative membrane protein insertion efficiency factor</fullName>
    </recommendedName>
</protein>
<dbReference type="EMBL" id="CP000087">
    <property type="protein sequence ID" value="ABE04472.1"/>
    <property type="molecule type" value="Genomic_DNA"/>
</dbReference>
<dbReference type="RefSeq" id="WP_011477081.1">
    <property type="nucleotide sequence ID" value="NC_007940.1"/>
</dbReference>
<dbReference type="KEGG" id="rbe:RBE_0391"/>
<dbReference type="eggNOG" id="COG0759">
    <property type="taxonomic scope" value="Bacteria"/>
</dbReference>
<dbReference type="HOGENOM" id="CLU_144811_6_0_5"/>
<dbReference type="OrthoDB" id="9801753at2"/>
<dbReference type="Proteomes" id="UP000001951">
    <property type="component" value="Chromosome"/>
</dbReference>
<dbReference type="GO" id="GO:0005886">
    <property type="term" value="C:plasma membrane"/>
    <property type="evidence" value="ECO:0007669"/>
    <property type="project" value="UniProtKB-SubCell"/>
</dbReference>
<dbReference type="HAMAP" id="MF_00386">
    <property type="entry name" value="UPF0161_YidD"/>
    <property type="match status" value="1"/>
</dbReference>
<dbReference type="InterPro" id="IPR002696">
    <property type="entry name" value="Membr_insert_effic_factor_YidD"/>
</dbReference>
<dbReference type="NCBIfam" id="TIGR00278">
    <property type="entry name" value="membrane protein insertion efficiency factor YidD"/>
    <property type="match status" value="1"/>
</dbReference>
<dbReference type="PANTHER" id="PTHR33383">
    <property type="entry name" value="MEMBRANE PROTEIN INSERTION EFFICIENCY FACTOR-RELATED"/>
    <property type="match status" value="1"/>
</dbReference>
<dbReference type="PANTHER" id="PTHR33383:SF1">
    <property type="entry name" value="MEMBRANE PROTEIN INSERTION EFFICIENCY FACTOR-RELATED"/>
    <property type="match status" value="1"/>
</dbReference>
<dbReference type="Pfam" id="PF01809">
    <property type="entry name" value="YidD"/>
    <property type="match status" value="1"/>
</dbReference>
<dbReference type="SMART" id="SM01234">
    <property type="entry name" value="Haemolytic"/>
    <property type="match status" value="1"/>
</dbReference>
<gene>
    <name type="ordered locus">RBE_0391</name>
</gene>
<name>YIDD_RICBR</name>
<sequence>MTRILLLLLTFYRYFISPLLGGNNCRFYPTCSKYAKEALNTHGGIKGLWLIFKRIIKCQPLCDGGYDPVPLTK</sequence>
<keyword id="KW-0997">Cell inner membrane</keyword>
<keyword id="KW-1003">Cell membrane</keyword>
<keyword id="KW-0472">Membrane</keyword>
<accession>Q1RJJ2</accession>
<proteinExistence type="inferred from homology"/>
<reference key="1">
    <citation type="journal article" date="2006" name="PLoS Genet.">
        <title>Genome sequence of Rickettsia bellii illuminates the role of amoebae in gene exchanges between intracellular pathogens.</title>
        <authorList>
            <person name="Ogata H."/>
            <person name="La Scola B."/>
            <person name="Audic S."/>
            <person name="Renesto P."/>
            <person name="Blanc G."/>
            <person name="Robert C."/>
            <person name="Fournier P.-E."/>
            <person name="Claverie J.-M."/>
            <person name="Raoult D."/>
        </authorList>
    </citation>
    <scope>NUCLEOTIDE SEQUENCE [LARGE SCALE GENOMIC DNA]</scope>
    <source>
        <strain>RML369-C</strain>
    </source>
</reference>
<feature type="chain" id="PRO_0000253158" description="Putative membrane protein insertion efficiency factor">
    <location>
        <begin position="1"/>
        <end position="73"/>
    </location>
</feature>
<evidence type="ECO:0000255" key="1">
    <source>
        <dbReference type="HAMAP-Rule" id="MF_00386"/>
    </source>
</evidence>
<comment type="function">
    <text evidence="1">Could be involved in insertion of integral membrane proteins into the membrane.</text>
</comment>
<comment type="subcellular location">
    <subcellularLocation>
        <location evidence="1">Cell inner membrane</location>
        <topology evidence="1">Peripheral membrane protein</topology>
        <orientation evidence="1">Cytoplasmic side</orientation>
    </subcellularLocation>
</comment>
<comment type="similarity">
    <text evidence="1">Belongs to the UPF0161 family.</text>
</comment>